<comment type="function">
    <text evidence="1">Phosphorylation of dTMP to form dTDP in both de novo and salvage pathways of dTTP synthesis.</text>
</comment>
<comment type="catalytic activity">
    <reaction evidence="1">
        <text>dTMP + ATP = dTDP + ADP</text>
        <dbReference type="Rhea" id="RHEA:13517"/>
        <dbReference type="ChEBI" id="CHEBI:30616"/>
        <dbReference type="ChEBI" id="CHEBI:58369"/>
        <dbReference type="ChEBI" id="CHEBI:63528"/>
        <dbReference type="ChEBI" id="CHEBI:456216"/>
        <dbReference type="EC" id="2.7.4.9"/>
    </reaction>
</comment>
<comment type="similarity">
    <text evidence="1">Belongs to the thymidylate kinase family.</text>
</comment>
<organism>
    <name type="scientific">Akkermansia muciniphila (strain ATCC BAA-835 / DSM 22959 / JCM 33894 / BCRC 81048 / CCUG 64013 / CIP 107961 / Muc)</name>
    <dbReference type="NCBI Taxonomy" id="349741"/>
    <lineage>
        <taxon>Bacteria</taxon>
        <taxon>Pseudomonadati</taxon>
        <taxon>Verrucomicrobiota</taxon>
        <taxon>Verrucomicrobiia</taxon>
        <taxon>Verrucomicrobiales</taxon>
        <taxon>Akkermansiaceae</taxon>
        <taxon>Akkermansia</taxon>
    </lineage>
</organism>
<dbReference type="EC" id="2.7.4.9" evidence="1"/>
<dbReference type="EMBL" id="CP001071">
    <property type="protein sequence ID" value="ACD05698.1"/>
    <property type="molecule type" value="Genomic_DNA"/>
</dbReference>
<dbReference type="RefSeq" id="WP_012420912.1">
    <property type="nucleotide sequence ID" value="NC_010655.1"/>
</dbReference>
<dbReference type="SMR" id="B2UN87"/>
<dbReference type="STRING" id="349741.Amuc_1884"/>
<dbReference type="PaxDb" id="349741-Amuc_1884"/>
<dbReference type="KEGG" id="amu:Amuc_1884"/>
<dbReference type="eggNOG" id="COG0125">
    <property type="taxonomic scope" value="Bacteria"/>
</dbReference>
<dbReference type="HOGENOM" id="CLU_049131_0_2_0"/>
<dbReference type="OrthoDB" id="9774907at2"/>
<dbReference type="BioCyc" id="AMUC349741:G1GBX-2009-MONOMER"/>
<dbReference type="Proteomes" id="UP000001031">
    <property type="component" value="Chromosome"/>
</dbReference>
<dbReference type="GO" id="GO:0005829">
    <property type="term" value="C:cytosol"/>
    <property type="evidence" value="ECO:0007669"/>
    <property type="project" value="TreeGrafter"/>
</dbReference>
<dbReference type="GO" id="GO:0005524">
    <property type="term" value="F:ATP binding"/>
    <property type="evidence" value="ECO:0007669"/>
    <property type="project" value="UniProtKB-UniRule"/>
</dbReference>
<dbReference type="GO" id="GO:0004798">
    <property type="term" value="F:dTMP kinase activity"/>
    <property type="evidence" value="ECO:0007669"/>
    <property type="project" value="UniProtKB-UniRule"/>
</dbReference>
<dbReference type="GO" id="GO:0006233">
    <property type="term" value="P:dTDP biosynthetic process"/>
    <property type="evidence" value="ECO:0007669"/>
    <property type="project" value="InterPro"/>
</dbReference>
<dbReference type="GO" id="GO:0006235">
    <property type="term" value="P:dTTP biosynthetic process"/>
    <property type="evidence" value="ECO:0007669"/>
    <property type="project" value="UniProtKB-UniRule"/>
</dbReference>
<dbReference type="GO" id="GO:0006227">
    <property type="term" value="P:dUDP biosynthetic process"/>
    <property type="evidence" value="ECO:0007669"/>
    <property type="project" value="TreeGrafter"/>
</dbReference>
<dbReference type="CDD" id="cd01672">
    <property type="entry name" value="TMPK"/>
    <property type="match status" value="1"/>
</dbReference>
<dbReference type="Gene3D" id="3.40.50.300">
    <property type="entry name" value="P-loop containing nucleotide triphosphate hydrolases"/>
    <property type="match status" value="1"/>
</dbReference>
<dbReference type="HAMAP" id="MF_00165">
    <property type="entry name" value="Thymidylate_kinase"/>
    <property type="match status" value="1"/>
</dbReference>
<dbReference type="InterPro" id="IPR027417">
    <property type="entry name" value="P-loop_NTPase"/>
</dbReference>
<dbReference type="InterPro" id="IPR039430">
    <property type="entry name" value="Thymidylate_kin-like_dom"/>
</dbReference>
<dbReference type="InterPro" id="IPR018094">
    <property type="entry name" value="Thymidylate_kinase"/>
</dbReference>
<dbReference type="NCBIfam" id="TIGR00041">
    <property type="entry name" value="DTMP_kinase"/>
    <property type="match status" value="1"/>
</dbReference>
<dbReference type="PANTHER" id="PTHR10344">
    <property type="entry name" value="THYMIDYLATE KINASE"/>
    <property type="match status" value="1"/>
</dbReference>
<dbReference type="PANTHER" id="PTHR10344:SF4">
    <property type="entry name" value="UMP-CMP KINASE 2, MITOCHONDRIAL"/>
    <property type="match status" value="1"/>
</dbReference>
<dbReference type="Pfam" id="PF02223">
    <property type="entry name" value="Thymidylate_kin"/>
    <property type="match status" value="1"/>
</dbReference>
<dbReference type="SUPFAM" id="SSF52540">
    <property type="entry name" value="P-loop containing nucleoside triphosphate hydrolases"/>
    <property type="match status" value="1"/>
</dbReference>
<keyword id="KW-0067">ATP-binding</keyword>
<keyword id="KW-0418">Kinase</keyword>
<keyword id="KW-0545">Nucleotide biosynthesis</keyword>
<keyword id="KW-0547">Nucleotide-binding</keyword>
<keyword id="KW-1185">Reference proteome</keyword>
<keyword id="KW-0808">Transferase</keyword>
<reference key="1">
    <citation type="journal article" date="2011" name="PLoS ONE">
        <title>The genome of Akkermansia muciniphila, a dedicated intestinal mucin degrader, and its use in exploring intestinal metagenomes.</title>
        <authorList>
            <person name="van Passel M.W."/>
            <person name="Kant R."/>
            <person name="Zoetendal E.G."/>
            <person name="Plugge C.M."/>
            <person name="Derrien M."/>
            <person name="Malfatti S.A."/>
            <person name="Chain P.S."/>
            <person name="Woyke T."/>
            <person name="Palva A."/>
            <person name="de Vos W.M."/>
            <person name="Smidt H."/>
        </authorList>
    </citation>
    <scope>NUCLEOTIDE SEQUENCE [LARGE SCALE GENOMIC DNA]</scope>
    <source>
        <strain>ATCC BAA-835 / DSM 22959 / JCM 33894 / BCRC 81048 / CCUG 64013 / CIP 107961 / Muc</strain>
    </source>
</reference>
<gene>
    <name evidence="1" type="primary">tmk</name>
    <name type="ordered locus">Amuc_1884</name>
</gene>
<proteinExistence type="inferred from homology"/>
<accession>B2UN87</accession>
<evidence type="ECO:0000255" key="1">
    <source>
        <dbReference type="HAMAP-Rule" id="MF_00165"/>
    </source>
</evidence>
<protein>
    <recommendedName>
        <fullName evidence="1">Thymidylate kinase</fullName>
        <ecNumber evidence="1">2.7.4.9</ecNumber>
    </recommendedName>
    <alternativeName>
        <fullName evidence="1">dTMP kinase</fullName>
    </alternativeName>
</protein>
<sequence>MSFTGERKGRLIVFEGIDGTGKSTHIGHLRKYLEEKELEVVQSFEPTRGRWGRMLRDSAVTGRLSVEEEVALFLKDRREHVKMLIAPALARGAWVLLDRYYLSMMAYQGARGIDPEVIRAANEEFAPVPDAVVWLDIPVSVALERIGNRGERDAFETEAGLAACRSVFASVHAPWMLRIDADAGKEEVAARVRKALSMRFPDVIGA</sequence>
<name>KTHY_AKKM8</name>
<feature type="chain" id="PRO_1000123552" description="Thymidylate kinase">
    <location>
        <begin position="1"/>
        <end position="206"/>
    </location>
</feature>
<feature type="binding site" evidence="1">
    <location>
        <begin position="16"/>
        <end position="23"/>
    </location>
    <ligand>
        <name>ATP</name>
        <dbReference type="ChEBI" id="CHEBI:30616"/>
    </ligand>
</feature>